<accession>Q3SJS2</accession>
<organism>
    <name type="scientific">Thiobacillus denitrificans (strain ATCC 25259 / T1)</name>
    <dbReference type="NCBI Taxonomy" id="292415"/>
    <lineage>
        <taxon>Bacteria</taxon>
        <taxon>Pseudomonadati</taxon>
        <taxon>Pseudomonadota</taxon>
        <taxon>Betaproteobacteria</taxon>
        <taxon>Nitrosomonadales</taxon>
        <taxon>Thiobacillaceae</taxon>
        <taxon>Thiobacillus</taxon>
    </lineage>
</organism>
<dbReference type="EC" id="1.17.1.8" evidence="1"/>
<dbReference type="EMBL" id="CP000116">
    <property type="protein sequence ID" value="AAZ97078.1"/>
    <property type="molecule type" value="Genomic_DNA"/>
</dbReference>
<dbReference type="RefSeq" id="WP_011311637.1">
    <property type="nucleotide sequence ID" value="NC_007404.1"/>
</dbReference>
<dbReference type="SMR" id="Q3SJS2"/>
<dbReference type="STRING" id="292415.Tbd_1125"/>
<dbReference type="KEGG" id="tbd:Tbd_1125"/>
<dbReference type="eggNOG" id="COG0289">
    <property type="taxonomic scope" value="Bacteria"/>
</dbReference>
<dbReference type="HOGENOM" id="CLU_047479_2_1_4"/>
<dbReference type="OrthoDB" id="9790352at2"/>
<dbReference type="UniPathway" id="UPA00034">
    <property type="reaction ID" value="UER00018"/>
</dbReference>
<dbReference type="Proteomes" id="UP000008291">
    <property type="component" value="Chromosome"/>
</dbReference>
<dbReference type="GO" id="GO:0005829">
    <property type="term" value="C:cytosol"/>
    <property type="evidence" value="ECO:0007669"/>
    <property type="project" value="TreeGrafter"/>
</dbReference>
<dbReference type="GO" id="GO:0008839">
    <property type="term" value="F:4-hydroxy-tetrahydrodipicolinate reductase"/>
    <property type="evidence" value="ECO:0007669"/>
    <property type="project" value="UniProtKB-EC"/>
</dbReference>
<dbReference type="GO" id="GO:0051287">
    <property type="term" value="F:NAD binding"/>
    <property type="evidence" value="ECO:0007669"/>
    <property type="project" value="UniProtKB-UniRule"/>
</dbReference>
<dbReference type="GO" id="GO:0050661">
    <property type="term" value="F:NADP binding"/>
    <property type="evidence" value="ECO:0007669"/>
    <property type="project" value="UniProtKB-UniRule"/>
</dbReference>
<dbReference type="GO" id="GO:0016726">
    <property type="term" value="F:oxidoreductase activity, acting on CH or CH2 groups, NAD or NADP as acceptor"/>
    <property type="evidence" value="ECO:0007669"/>
    <property type="project" value="UniProtKB-UniRule"/>
</dbReference>
<dbReference type="GO" id="GO:0019877">
    <property type="term" value="P:diaminopimelate biosynthetic process"/>
    <property type="evidence" value="ECO:0007669"/>
    <property type="project" value="UniProtKB-UniRule"/>
</dbReference>
<dbReference type="GO" id="GO:0009089">
    <property type="term" value="P:lysine biosynthetic process via diaminopimelate"/>
    <property type="evidence" value="ECO:0007669"/>
    <property type="project" value="UniProtKB-UniRule"/>
</dbReference>
<dbReference type="CDD" id="cd02274">
    <property type="entry name" value="DHDPR_N"/>
    <property type="match status" value="1"/>
</dbReference>
<dbReference type="FunFam" id="3.30.360.10:FF:000004">
    <property type="entry name" value="4-hydroxy-tetrahydrodipicolinate reductase"/>
    <property type="match status" value="1"/>
</dbReference>
<dbReference type="Gene3D" id="3.30.360.10">
    <property type="entry name" value="Dihydrodipicolinate Reductase, domain 2"/>
    <property type="match status" value="1"/>
</dbReference>
<dbReference type="Gene3D" id="3.40.50.720">
    <property type="entry name" value="NAD(P)-binding Rossmann-like Domain"/>
    <property type="match status" value="1"/>
</dbReference>
<dbReference type="HAMAP" id="MF_00102">
    <property type="entry name" value="DapB"/>
    <property type="match status" value="1"/>
</dbReference>
<dbReference type="InterPro" id="IPR022663">
    <property type="entry name" value="DapB_C"/>
</dbReference>
<dbReference type="InterPro" id="IPR000846">
    <property type="entry name" value="DapB_N"/>
</dbReference>
<dbReference type="InterPro" id="IPR022664">
    <property type="entry name" value="DapB_N_CS"/>
</dbReference>
<dbReference type="InterPro" id="IPR023940">
    <property type="entry name" value="DHDPR_bac"/>
</dbReference>
<dbReference type="InterPro" id="IPR036291">
    <property type="entry name" value="NAD(P)-bd_dom_sf"/>
</dbReference>
<dbReference type="NCBIfam" id="TIGR00036">
    <property type="entry name" value="dapB"/>
    <property type="match status" value="1"/>
</dbReference>
<dbReference type="PANTHER" id="PTHR20836:SF0">
    <property type="entry name" value="4-HYDROXY-TETRAHYDRODIPICOLINATE REDUCTASE 1, CHLOROPLASTIC-RELATED"/>
    <property type="match status" value="1"/>
</dbReference>
<dbReference type="PANTHER" id="PTHR20836">
    <property type="entry name" value="DIHYDRODIPICOLINATE REDUCTASE"/>
    <property type="match status" value="1"/>
</dbReference>
<dbReference type="Pfam" id="PF05173">
    <property type="entry name" value="DapB_C"/>
    <property type="match status" value="1"/>
</dbReference>
<dbReference type="Pfam" id="PF01113">
    <property type="entry name" value="DapB_N"/>
    <property type="match status" value="1"/>
</dbReference>
<dbReference type="PIRSF" id="PIRSF000161">
    <property type="entry name" value="DHPR"/>
    <property type="match status" value="1"/>
</dbReference>
<dbReference type="SUPFAM" id="SSF55347">
    <property type="entry name" value="Glyceraldehyde-3-phosphate dehydrogenase-like, C-terminal domain"/>
    <property type="match status" value="1"/>
</dbReference>
<dbReference type="SUPFAM" id="SSF51735">
    <property type="entry name" value="NAD(P)-binding Rossmann-fold domains"/>
    <property type="match status" value="1"/>
</dbReference>
<dbReference type="PROSITE" id="PS01298">
    <property type="entry name" value="DAPB"/>
    <property type="match status" value="1"/>
</dbReference>
<sequence length="267" mass="27521">MSVRVAIAGVSGRMGRALLEAVAADDGCALYAALDRPGSSLVGQDAGAAWGAANGVTVTDQAQAALKGAQVLVDFTRPEATFGYLEACALDGVPVVIGTTGFDEAGRARIAAAAERVPVVFAPNMSVGVNLLMKLAEVAAEVLQDGYDIEIIEAHHRHKVDAPSGTALGLGQAVARASGRDLEACAVYGREGVTGERDPRTIGFATVRGGDIVGDHTLLFAGVGERVELTHKASSRATFAQGALRAAKWVQGRAPGLYDMRDVLGLK</sequence>
<name>DAPB_THIDA</name>
<gene>
    <name evidence="1" type="primary">dapB</name>
    <name type="ordered locus">Tbd_1125</name>
</gene>
<evidence type="ECO:0000255" key="1">
    <source>
        <dbReference type="HAMAP-Rule" id="MF_00102"/>
    </source>
</evidence>
<evidence type="ECO:0000305" key="2"/>
<feature type="chain" id="PRO_0000228398" description="4-hydroxy-tetrahydrodipicolinate reductase">
    <location>
        <begin position="1"/>
        <end position="267"/>
    </location>
</feature>
<feature type="active site" description="Proton donor/acceptor" evidence="1">
    <location>
        <position position="155"/>
    </location>
</feature>
<feature type="active site" description="Proton donor" evidence="1">
    <location>
        <position position="159"/>
    </location>
</feature>
<feature type="binding site" evidence="1">
    <location>
        <begin position="9"/>
        <end position="14"/>
    </location>
    <ligand>
        <name>NAD(+)</name>
        <dbReference type="ChEBI" id="CHEBI:57540"/>
    </ligand>
</feature>
<feature type="binding site" evidence="1">
    <location>
        <position position="35"/>
    </location>
    <ligand>
        <name>NAD(+)</name>
        <dbReference type="ChEBI" id="CHEBI:57540"/>
    </ligand>
</feature>
<feature type="binding site" evidence="1">
    <location>
        <position position="36"/>
    </location>
    <ligand>
        <name>NADP(+)</name>
        <dbReference type="ChEBI" id="CHEBI:58349"/>
    </ligand>
</feature>
<feature type="binding site" evidence="1">
    <location>
        <begin position="98"/>
        <end position="100"/>
    </location>
    <ligand>
        <name>NAD(+)</name>
        <dbReference type="ChEBI" id="CHEBI:57540"/>
    </ligand>
</feature>
<feature type="binding site" evidence="1">
    <location>
        <begin position="122"/>
        <end position="125"/>
    </location>
    <ligand>
        <name>NAD(+)</name>
        <dbReference type="ChEBI" id="CHEBI:57540"/>
    </ligand>
</feature>
<feature type="binding site" evidence="1">
    <location>
        <position position="156"/>
    </location>
    <ligand>
        <name>(S)-2,3,4,5-tetrahydrodipicolinate</name>
        <dbReference type="ChEBI" id="CHEBI:16845"/>
    </ligand>
</feature>
<feature type="binding site" evidence="1">
    <location>
        <begin position="165"/>
        <end position="166"/>
    </location>
    <ligand>
        <name>(S)-2,3,4,5-tetrahydrodipicolinate</name>
        <dbReference type="ChEBI" id="CHEBI:16845"/>
    </ligand>
</feature>
<reference key="1">
    <citation type="journal article" date="2006" name="J. Bacteriol.">
        <title>The genome sequence of the obligately chemolithoautotrophic, facultatively anaerobic bacterium Thiobacillus denitrificans.</title>
        <authorList>
            <person name="Beller H.R."/>
            <person name="Chain P.S."/>
            <person name="Letain T.E."/>
            <person name="Chakicherla A."/>
            <person name="Larimer F.W."/>
            <person name="Richardson P.M."/>
            <person name="Coleman M.A."/>
            <person name="Wood A.P."/>
            <person name="Kelly D.P."/>
        </authorList>
    </citation>
    <scope>NUCLEOTIDE SEQUENCE [LARGE SCALE GENOMIC DNA]</scope>
    <source>
        <strain>ATCC 25259 / T1</strain>
    </source>
</reference>
<protein>
    <recommendedName>
        <fullName evidence="1">4-hydroxy-tetrahydrodipicolinate reductase</fullName>
        <shortName evidence="1">HTPA reductase</shortName>
        <ecNumber evidence="1">1.17.1.8</ecNumber>
    </recommendedName>
</protein>
<keyword id="KW-0028">Amino-acid biosynthesis</keyword>
<keyword id="KW-0963">Cytoplasm</keyword>
<keyword id="KW-0220">Diaminopimelate biosynthesis</keyword>
<keyword id="KW-0457">Lysine biosynthesis</keyword>
<keyword id="KW-0520">NAD</keyword>
<keyword id="KW-0521">NADP</keyword>
<keyword id="KW-0560">Oxidoreductase</keyword>
<keyword id="KW-1185">Reference proteome</keyword>
<proteinExistence type="inferred from homology"/>
<comment type="function">
    <text evidence="1">Catalyzes the conversion of 4-hydroxy-tetrahydrodipicolinate (HTPA) to tetrahydrodipicolinate.</text>
</comment>
<comment type="catalytic activity">
    <reaction evidence="1">
        <text>(S)-2,3,4,5-tetrahydrodipicolinate + NAD(+) + H2O = (2S,4S)-4-hydroxy-2,3,4,5-tetrahydrodipicolinate + NADH + H(+)</text>
        <dbReference type="Rhea" id="RHEA:35323"/>
        <dbReference type="ChEBI" id="CHEBI:15377"/>
        <dbReference type="ChEBI" id="CHEBI:15378"/>
        <dbReference type="ChEBI" id="CHEBI:16845"/>
        <dbReference type="ChEBI" id="CHEBI:57540"/>
        <dbReference type="ChEBI" id="CHEBI:57945"/>
        <dbReference type="ChEBI" id="CHEBI:67139"/>
        <dbReference type="EC" id="1.17.1.8"/>
    </reaction>
</comment>
<comment type="catalytic activity">
    <reaction evidence="1">
        <text>(S)-2,3,4,5-tetrahydrodipicolinate + NADP(+) + H2O = (2S,4S)-4-hydroxy-2,3,4,5-tetrahydrodipicolinate + NADPH + H(+)</text>
        <dbReference type="Rhea" id="RHEA:35331"/>
        <dbReference type="ChEBI" id="CHEBI:15377"/>
        <dbReference type="ChEBI" id="CHEBI:15378"/>
        <dbReference type="ChEBI" id="CHEBI:16845"/>
        <dbReference type="ChEBI" id="CHEBI:57783"/>
        <dbReference type="ChEBI" id="CHEBI:58349"/>
        <dbReference type="ChEBI" id="CHEBI:67139"/>
        <dbReference type="EC" id="1.17.1.8"/>
    </reaction>
</comment>
<comment type="pathway">
    <text evidence="1">Amino-acid biosynthesis; L-lysine biosynthesis via DAP pathway; (S)-tetrahydrodipicolinate from L-aspartate: step 4/4.</text>
</comment>
<comment type="subcellular location">
    <subcellularLocation>
        <location evidence="1">Cytoplasm</location>
    </subcellularLocation>
</comment>
<comment type="similarity">
    <text evidence="1">Belongs to the DapB family.</text>
</comment>
<comment type="caution">
    <text evidence="2">Was originally thought to be a dihydrodipicolinate reductase (DHDPR), catalyzing the conversion of dihydrodipicolinate to tetrahydrodipicolinate. However, it was shown in E.coli that the substrate of the enzymatic reaction is not dihydrodipicolinate (DHDP) but in fact (2S,4S)-4-hydroxy-2,3,4,5-tetrahydrodipicolinic acid (HTPA), the product released by the DapA-catalyzed reaction.</text>
</comment>